<protein>
    <recommendedName>
        <fullName>Protein phosphatase 1 regulatory subunit 27</fullName>
    </recommendedName>
    <alternativeName>
        <fullName>Dysferlin-interacting protein 1</fullName>
    </alternativeName>
    <alternativeName>
        <fullName>Toonin</fullName>
    </alternativeName>
</protein>
<organism>
    <name type="scientific">Homo sapiens</name>
    <name type="common">Human</name>
    <dbReference type="NCBI Taxonomy" id="9606"/>
    <lineage>
        <taxon>Eukaryota</taxon>
        <taxon>Metazoa</taxon>
        <taxon>Chordata</taxon>
        <taxon>Craniata</taxon>
        <taxon>Vertebrata</taxon>
        <taxon>Euteleostomi</taxon>
        <taxon>Mammalia</taxon>
        <taxon>Eutheria</taxon>
        <taxon>Euarchontoglires</taxon>
        <taxon>Primates</taxon>
        <taxon>Haplorrhini</taxon>
        <taxon>Catarrhini</taxon>
        <taxon>Hominidae</taxon>
        <taxon>Homo</taxon>
    </lineage>
</organism>
<evidence type="ECO:0000269" key="1">
    <source>
    </source>
</evidence>
<evidence type="ECO:0000269" key="2">
    <source ref="1"/>
</evidence>
<comment type="function">
    <text evidence="1">Inhibits phosphatase activity of protein phosphatase 1 (PP1) complexes.</text>
</comment>
<comment type="subunit">
    <text evidence="1 2">Interacts with DYSF and PPP1CA.</text>
</comment>
<comment type="interaction">
    <interactant intactId="EBI-5235602">
        <id>Q86WC6</id>
    </interactant>
    <interactant intactId="EBI-742054">
        <id>Q96D03</id>
        <label>DDIT4L</label>
    </interactant>
    <organismsDiffer>false</organismsDiffer>
    <experiments>3</experiments>
</comment>
<comment type="interaction">
    <interactant intactId="EBI-5235602">
        <id>Q86WC6</id>
    </interactant>
    <interactant intactId="EBI-746252">
        <id>Q96CN9</id>
        <label>GCC1</label>
    </interactant>
    <organismsDiffer>false</organismsDiffer>
    <experiments>3</experiments>
</comment>
<comment type="interaction">
    <interactant intactId="EBI-5235602">
        <id>Q86WC6</id>
    </interactant>
    <interactant intactId="EBI-1047093">
        <id>O76011</id>
        <label>KRT34</label>
    </interactant>
    <organismsDiffer>false</organismsDiffer>
    <experiments>3</experiments>
</comment>
<comment type="interaction">
    <interactant intactId="EBI-5235602">
        <id>Q86WC6</id>
    </interactant>
    <interactant intactId="EBI-4290865">
        <id>Q96EY5</id>
        <label>MVB12A</label>
    </interactant>
    <organismsDiffer>false</organismsDiffer>
    <experiments>3</experiments>
</comment>
<comment type="interaction">
    <interactant intactId="EBI-5235602">
        <id>Q86WC6</id>
    </interactant>
    <interactant intactId="EBI-741158">
        <id>Q96HA8</id>
        <label>NTAQ1</label>
    </interactant>
    <organismsDiffer>false</organismsDiffer>
    <experiments>3</experiments>
</comment>
<comment type="interaction">
    <interactant intactId="EBI-5235602">
        <id>Q86WC6</id>
    </interactant>
    <interactant intactId="EBI-357253">
        <id>P62136</id>
        <label>PPP1CA</label>
    </interactant>
    <organismsDiffer>false</organismsDiffer>
    <experiments>5</experiments>
</comment>
<comment type="interaction">
    <interactant intactId="EBI-5235602">
        <id>Q86WC6</id>
    </interactant>
    <interactant intactId="EBI-352350">
        <id>P62140</id>
        <label>PPP1CB</label>
    </interactant>
    <organismsDiffer>false</organismsDiffer>
    <experiments>3</experiments>
</comment>
<comment type="interaction">
    <interactant intactId="EBI-5235602">
        <id>Q86WC6</id>
    </interactant>
    <interactant intactId="EBI-358122">
        <id>P32969</id>
        <label>RPL9P9</label>
    </interactant>
    <organismsDiffer>false</organismsDiffer>
    <experiments>3</experiments>
</comment>
<comment type="interaction">
    <interactant intactId="EBI-5235602">
        <id>Q86WC6</id>
    </interactant>
    <interactant intactId="EBI-750494">
        <id>P49901</id>
        <label>SMCP</label>
    </interactant>
    <organismsDiffer>false</organismsDiffer>
    <experiments>3</experiments>
</comment>
<comment type="interaction">
    <interactant intactId="EBI-5235602">
        <id>Q86WC6</id>
    </interactant>
    <interactant intactId="EBI-3921014">
        <id>Q9H609</id>
        <label>ZNF576</label>
    </interactant>
    <organismsDiffer>false</organismsDiffer>
    <experiments>3</experiments>
</comment>
<reference key="1">
    <citation type="submission" date="2001-10" db="EMBL/GenBank/DDBJ databases">
        <title>Identification of a novel gene interacting with dysferlin in skeletal muscle.</title>
        <authorList>
            <person name="Vafiadaki E."/>
            <person name="Laval S.H."/>
            <person name="Brown J.D."/>
            <person name="Anderson L.V.B."/>
            <person name="Bashir R."/>
            <person name="Bushby K."/>
        </authorList>
    </citation>
    <scope>NUCLEOTIDE SEQUENCE [MRNA]</scope>
    <scope>INTERACTION WITH DYSF</scope>
</reference>
<reference key="2">
    <citation type="journal article" date="2004" name="Genome Res.">
        <title>The status, quality, and expansion of the NIH full-length cDNA project: the Mammalian Gene Collection (MGC).</title>
        <authorList>
            <consortium name="The MGC Project Team"/>
        </authorList>
    </citation>
    <scope>NUCLEOTIDE SEQUENCE [LARGE SCALE MRNA]</scope>
    <source>
        <tissue>Brain</tissue>
    </source>
</reference>
<reference key="3">
    <citation type="journal article" date="2009" name="Chem. Biol.">
        <title>Docking motif-guided mapping of the interactome of protein phosphatase-1.</title>
        <authorList>
            <person name="Hendrickx A."/>
            <person name="Beullens M."/>
            <person name="Ceulemans H."/>
            <person name="Den Abt T."/>
            <person name="Van Eynde A."/>
            <person name="Nicolaescu E."/>
            <person name="Lesage B."/>
            <person name="Bollen M."/>
        </authorList>
    </citation>
    <scope>FUNCTION</scope>
    <scope>INTERACTION WITH PPP1CA</scope>
</reference>
<accession>Q86WC6</accession>
<feature type="chain" id="PRO_0000264469" description="Protein phosphatase 1 regulatory subunit 27">
    <location>
        <begin position="1"/>
        <end position="154"/>
    </location>
</feature>
<feature type="repeat" description="ANK 1">
    <location>
        <begin position="63"/>
        <end position="92"/>
    </location>
</feature>
<feature type="repeat" description="ANK 2">
    <location>
        <begin position="96"/>
        <end position="125"/>
    </location>
</feature>
<sequence>MPSRTARYARYSPRQRRRRMLADRSVRFPNDVLFLDHIRQGDLEQVGRFIRTRKVSLATIHPSGLAALHEAVLSGNLECVKLLVKYGADIHQRDEAGWTPLHIACSDGYPDIARYLISLGADRDATNDDGDLPSDLIDPDYKELVELFKGTTMD</sequence>
<keyword id="KW-0040">ANK repeat</keyword>
<keyword id="KW-0650">Protein phosphatase inhibitor</keyword>
<keyword id="KW-1267">Proteomics identification</keyword>
<keyword id="KW-1185">Reference proteome</keyword>
<keyword id="KW-0677">Repeat</keyword>
<name>PPR27_HUMAN</name>
<proteinExistence type="evidence at protein level"/>
<gene>
    <name type="primary">PPP1R27</name>
    <name type="synonym">DYSFIP1</name>
</gene>
<dbReference type="EMBL" id="AF434846">
    <property type="protein sequence ID" value="AAO67357.1"/>
    <property type="molecule type" value="mRNA"/>
</dbReference>
<dbReference type="EMBL" id="BC093707">
    <property type="protein sequence ID" value="AAH93707.1"/>
    <property type="molecule type" value="mRNA"/>
</dbReference>
<dbReference type="EMBL" id="BC112094">
    <property type="protein sequence ID" value="AAI12095.1"/>
    <property type="molecule type" value="mRNA"/>
</dbReference>
<dbReference type="CCDS" id="CCDS32767.1"/>
<dbReference type="RefSeq" id="NP_001007534.1">
    <property type="nucleotide sequence ID" value="NM_001007533.4"/>
</dbReference>
<dbReference type="SMR" id="Q86WC6"/>
<dbReference type="BioGRID" id="125525">
    <property type="interactions" value="11"/>
</dbReference>
<dbReference type="FunCoup" id="Q86WC6">
    <property type="interactions" value="3"/>
</dbReference>
<dbReference type="IntAct" id="Q86WC6">
    <property type="interactions" value="10"/>
</dbReference>
<dbReference type="STRING" id="9606.ENSP00000331065"/>
<dbReference type="iPTMnet" id="Q86WC6"/>
<dbReference type="PhosphoSitePlus" id="Q86WC6"/>
<dbReference type="BioMuta" id="PPP1R27"/>
<dbReference type="DMDM" id="74750495"/>
<dbReference type="MassIVE" id="Q86WC6"/>
<dbReference type="PaxDb" id="9606-ENSP00000331065"/>
<dbReference type="PeptideAtlas" id="Q86WC6"/>
<dbReference type="ProteomicsDB" id="70146"/>
<dbReference type="Antibodypedia" id="32907">
    <property type="antibodies" value="93 antibodies from 16 providers"/>
</dbReference>
<dbReference type="DNASU" id="116729"/>
<dbReference type="Ensembl" id="ENST00000330261.5">
    <property type="protein sequence ID" value="ENSP00000331065.4"/>
    <property type="gene ID" value="ENSG00000182676.5"/>
</dbReference>
<dbReference type="Ensembl" id="ENST00000672496.1">
    <property type="protein sequence ID" value="ENSP00000500294.1"/>
    <property type="gene ID" value="ENSG00000288186.1"/>
</dbReference>
<dbReference type="GeneID" id="116729"/>
<dbReference type="KEGG" id="hsa:116729"/>
<dbReference type="MANE-Select" id="ENST00000330261.5">
    <property type="protein sequence ID" value="ENSP00000331065.4"/>
    <property type="RefSeq nucleotide sequence ID" value="NM_001007533.4"/>
    <property type="RefSeq protein sequence ID" value="NP_001007534.1"/>
</dbReference>
<dbReference type="UCSC" id="uc002kbj.2">
    <property type="organism name" value="human"/>
</dbReference>
<dbReference type="AGR" id="HGNC:16813"/>
<dbReference type="CTD" id="116729"/>
<dbReference type="GeneCards" id="PPP1R27"/>
<dbReference type="HGNC" id="HGNC:16813">
    <property type="gene designation" value="PPP1R27"/>
</dbReference>
<dbReference type="HPA" id="ENSG00000182676">
    <property type="expression patterns" value="Tissue enriched (skeletal)"/>
</dbReference>
<dbReference type="neXtProt" id="NX_Q86WC6"/>
<dbReference type="OpenTargets" id="ENSG00000182676"/>
<dbReference type="PharmGKB" id="PA27555"/>
<dbReference type="VEuPathDB" id="HostDB:ENSG00000182676"/>
<dbReference type="eggNOG" id="KOG0505">
    <property type="taxonomic scope" value="Eukaryota"/>
</dbReference>
<dbReference type="GeneTree" id="ENSGT00940000159603"/>
<dbReference type="InParanoid" id="Q86WC6"/>
<dbReference type="OMA" id="QRDATND"/>
<dbReference type="OrthoDB" id="71307at2759"/>
<dbReference type="PAN-GO" id="Q86WC6">
    <property type="GO annotations" value="1 GO annotation based on evolutionary models"/>
</dbReference>
<dbReference type="PhylomeDB" id="Q86WC6"/>
<dbReference type="TreeFam" id="TF333311"/>
<dbReference type="PathwayCommons" id="Q86WC6"/>
<dbReference type="SignaLink" id="Q86WC6"/>
<dbReference type="BioGRID-ORCS" id="116729">
    <property type="hits" value="13 hits in 1141 CRISPR screens"/>
</dbReference>
<dbReference type="ChiTaRS" id="PPP1R27">
    <property type="organism name" value="human"/>
</dbReference>
<dbReference type="GenomeRNAi" id="116729"/>
<dbReference type="Pharos" id="Q86WC6">
    <property type="development level" value="Tdark"/>
</dbReference>
<dbReference type="PRO" id="PR:Q86WC6"/>
<dbReference type="Proteomes" id="UP000005640">
    <property type="component" value="Chromosome 17"/>
</dbReference>
<dbReference type="RNAct" id="Q86WC6">
    <property type="molecule type" value="protein"/>
</dbReference>
<dbReference type="Bgee" id="ENSG00000182676">
    <property type="expression patterns" value="Expressed in hindlimb stylopod muscle and 88 other cell types or tissues"/>
</dbReference>
<dbReference type="ExpressionAtlas" id="Q86WC6">
    <property type="expression patterns" value="baseline and differential"/>
</dbReference>
<dbReference type="GO" id="GO:0019902">
    <property type="term" value="F:phosphatase binding"/>
    <property type="evidence" value="ECO:0000314"/>
    <property type="project" value="UniProtKB"/>
</dbReference>
<dbReference type="GO" id="GO:0004864">
    <property type="term" value="F:protein phosphatase inhibitor activity"/>
    <property type="evidence" value="ECO:0007669"/>
    <property type="project" value="UniProtKB-KW"/>
</dbReference>
<dbReference type="FunFam" id="1.25.40.20:FF:000189">
    <property type="entry name" value="Protein phosphatase 1 regulatory subunit 27"/>
    <property type="match status" value="1"/>
</dbReference>
<dbReference type="Gene3D" id="1.25.40.20">
    <property type="entry name" value="Ankyrin repeat-containing domain"/>
    <property type="match status" value="1"/>
</dbReference>
<dbReference type="InterPro" id="IPR002110">
    <property type="entry name" value="Ankyrin_rpt"/>
</dbReference>
<dbReference type="InterPro" id="IPR036770">
    <property type="entry name" value="Ankyrin_rpt-contain_sf"/>
</dbReference>
<dbReference type="InterPro" id="IPR053080">
    <property type="entry name" value="PP1_regulatory_subunit_27"/>
</dbReference>
<dbReference type="PANTHER" id="PTHR46899">
    <property type="entry name" value="PROTEIN PHOSPHATASE 1 REGULATORY SUBUNIT 27"/>
    <property type="match status" value="1"/>
</dbReference>
<dbReference type="PANTHER" id="PTHR46899:SF3">
    <property type="entry name" value="PROTEIN PHOSPHATASE 1 REGULATORY SUBUNIT 27"/>
    <property type="match status" value="1"/>
</dbReference>
<dbReference type="Pfam" id="PF12796">
    <property type="entry name" value="Ank_2"/>
    <property type="match status" value="1"/>
</dbReference>
<dbReference type="SMART" id="SM00248">
    <property type="entry name" value="ANK"/>
    <property type="match status" value="2"/>
</dbReference>
<dbReference type="SUPFAM" id="SSF48403">
    <property type="entry name" value="Ankyrin repeat"/>
    <property type="match status" value="1"/>
</dbReference>
<dbReference type="PROSITE" id="PS50297">
    <property type="entry name" value="ANK_REP_REGION"/>
    <property type="match status" value="1"/>
</dbReference>
<dbReference type="PROSITE" id="PS50088">
    <property type="entry name" value="ANK_REPEAT"/>
    <property type="match status" value="2"/>
</dbReference>